<name>RL21_ECO5E</name>
<keyword id="KW-0687">Ribonucleoprotein</keyword>
<keyword id="KW-0689">Ribosomal protein</keyword>
<keyword id="KW-0694">RNA-binding</keyword>
<keyword id="KW-0699">rRNA-binding</keyword>
<reference key="1">
    <citation type="journal article" date="2011" name="Proc. Natl. Acad. Sci. U.S.A.">
        <title>Genomic anatomy of Escherichia coli O157:H7 outbreaks.</title>
        <authorList>
            <person name="Eppinger M."/>
            <person name="Mammel M.K."/>
            <person name="Leclerc J.E."/>
            <person name="Ravel J."/>
            <person name="Cebula T.A."/>
        </authorList>
    </citation>
    <scope>NUCLEOTIDE SEQUENCE [LARGE SCALE GENOMIC DNA]</scope>
    <source>
        <strain>EC4115 / EHEC</strain>
    </source>
</reference>
<gene>
    <name evidence="1" type="primary">rplU</name>
    <name type="ordered locus">ECH74115_4508</name>
</gene>
<sequence>MYAVFQSGGKQHRVSEGQTVRLEKLDIATGETVEFAEVLMIANGEEVKIGVPFVDGGVIKAEVVAHGRGEKVKIVKFRRRKHYRKQQGHRQWFTDVKITGISA</sequence>
<proteinExistence type="inferred from homology"/>
<accession>B5YS75</accession>
<organism>
    <name type="scientific">Escherichia coli O157:H7 (strain EC4115 / EHEC)</name>
    <dbReference type="NCBI Taxonomy" id="444450"/>
    <lineage>
        <taxon>Bacteria</taxon>
        <taxon>Pseudomonadati</taxon>
        <taxon>Pseudomonadota</taxon>
        <taxon>Gammaproteobacteria</taxon>
        <taxon>Enterobacterales</taxon>
        <taxon>Enterobacteriaceae</taxon>
        <taxon>Escherichia</taxon>
    </lineage>
</organism>
<evidence type="ECO:0000255" key="1">
    <source>
        <dbReference type="HAMAP-Rule" id="MF_01363"/>
    </source>
</evidence>
<evidence type="ECO:0000305" key="2"/>
<protein>
    <recommendedName>
        <fullName evidence="1">Large ribosomal subunit protein bL21</fullName>
    </recommendedName>
    <alternativeName>
        <fullName evidence="2">50S ribosomal protein L21</fullName>
    </alternativeName>
</protein>
<dbReference type="EMBL" id="CP001164">
    <property type="protein sequence ID" value="ACI38352.1"/>
    <property type="molecule type" value="Genomic_DNA"/>
</dbReference>
<dbReference type="RefSeq" id="WP_000271401.1">
    <property type="nucleotide sequence ID" value="NC_011353.1"/>
</dbReference>
<dbReference type="SMR" id="B5YS75"/>
<dbReference type="GeneID" id="93778795"/>
<dbReference type="KEGG" id="ecf:ECH74115_4508"/>
<dbReference type="HOGENOM" id="CLU_061463_3_3_6"/>
<dbReference type="GO" id="GO:0005737">
    <property type="term" value="C:cytoplasm"/>
    <property type="evidence" value="ECO:0007669"/>
    <property type="project" value="UniProtKB-ARBA"/>
</dbReference>
<dbReference type="GO" id="GO:1990904">
    <property type="term" value="C:ribonucleoprotein complex"/>
    <property type="evidence" value="ECO:0007669"/>
    <property type="project" value="UniProtKB-KW"/>
</dbReference>
<dbReference type="GO" id="GO:0005840">
    <property type="term" value="C:ribosome"/>
    <property type="evidence" value="ECO:0007669"/>
    <property type="project" value="UniProtKB-KW"/>
</dbReference>
<dbReference type="GO" id="GO:0019843">
    <property type="term" value="F:rRNA binding"/>
    <property type="evidence" value="ECO:0007669"/>
    <property type="project" value="UniProtKB-UniRule"/>
</dbReference>
<dbReference type="GO" id="GO:0003735">
    <property type="term" value="F:structural constituent of ribosome"/>
    <property type="evidence" value="ECO:0007669"/>
    <property type="project" value="InterPro"/>
</dbReference>
<dbReference type="GO" id="GO:0006412">
    <property type="term" value="P:translation"/>
    <property type="evidence" value="ECO:0007669"/>
    <property type="project" value="UniProtKB-UniRule"/>
</dbReference>
<dbReference type="HAMAP" id="MF_01363">
    <property type="entry name" value="Ribosomal_bL21"/>
    <property type="match status" value="1"/>
</dbReference>
<dbReference type="InterPro" id="IPR028909">
    <property type="entry name" value="bL21-like"/>
</dbReference>
<dbReference type="InterPro" id="IPR036164">
    <property type="entry name" value="bL21-like_sf"/>
</dbReference>
<dbReference type="InterPro" id="IPR001787">
    <property type="entry name" value="Ribosomal_bL21"/>
</dbReference>
<dbReference type="InterPro" id="IPR018258">
    <property type="entry name" value="Ribosomal_bL21_CS"/>
</dbReference>
<dbReference type="NCBIfam" id="TIGR00061">
    <property type="entry name" value="L21"/>
    <property type="match status" value="1"/>
</dbReference>
<dbReference type="PANTHER" id="PTHR21349">
    <property type="entry name" value="50S RIBOSOMAL PROTEIN L21"/>
    <property type="match status" value="1"/>
</dbReference>
<dbReference type="PANTHER" id="PTHR21349:SF0">
    <property type="entry name" value="LARGE RIBOSOMAL SUBUNIT PROTEIN BL21M"/>
    <property type="match status" value="1"/>
</dbReference>
<dbReference type="Pfam" id="PF00829">
    <property type="entry name" value="Ribosomal_L21p"/>
    <property type="match status" value="1"/>
</dbReference>
<dbReference type="SUPFAM" id="SSF141091">
    <property type="entry name" value="L21p-like"/>
    <property type="match status" value="1"/>
</dbReference>
<dbReference type="PROSITE" id="PS01169">
    <property type="entry name" value="RIBOSOMAL_L21"/>
    <property type="match status" value="1"/>
</dbReference>
<comment type="function">
    <text evidence="1">This protein binds to 23S rRNA in the presence of protein L20.</text>
</comment>
<comment type="subunit">
    <text evidence="1">Part of the 50S ribosomal subunit. Contacts protein L20.</text>
</comment>
<comment type="similarity">
    <text evidence="1">Belongs to the bacterial ribosomal protein bL21 family.</text>
</comment>
<feature type="chain" id="PRO_1000143789" description="Large ribosomal subunit protein bL21">
    <location>
        <begin position="1"/>
        <end position="103"/>
    </location>
</feature>